<sequence length="2150" mass="242582">MRSIGGSFHLLQPVVAALILLVVCLVYALQSGSGTISEFSSDVLFSRAKYSGVPVHHSRWRQDAGIHVIDSHHIVRRDSYGRRGKRDVTSTDRRRRLQGVARDCGHACHLRLRSDDAVYIVHLHRWNQIPDSHNKSVPHFSNSNFAPMVLYLDSEEEVRGGMSRTDPDCIYRAHVKGVHQHSIVNLCDSEDGLYGMLALPSGIHTVEPIISGNGTEHDGASRHRQHLVRKFDPMHFKSFDHLNSTSVNETETTVATWQDQWEDVIERKARSRRAANSWDHYVEVLVVADTKMYEYHGRSLEDYVLTLFSTVASIYRHQSLRASINVVVVKLIVLKTENAGPRITQNAQQTLQDFCRWQQYYNDPDDSSVQHHDVAILLTRKDICRSQGKCDTLGLAELGTMCDMQKSCAIIEDNGLSAAFTIAHELGHVFSIPHDDERKCSTYMPVNKNNFHIMAPTLEYNTHPWSWSPCSAGMLERFLENNRGQTQCLFDQPVERRYYEDVFVRDEPGKKYDAHQQCKFVFGPASELCPYMPTCRRLWCATFYGSQMGCRTQHMPWADGTPCDESRSMFCHHGACVRLAPESLTKIDGQWGDWRSWGECSRTCGGGVQKGLRDCDSPKPRNGGKYCVGQRERYRSCNTQECPWDTQPYREVQCSEFNNKDIGIQGVASTNTHWVPKYANVAPNERCKLYCRLSGSAAFYLLRDKVVDGTPCDRNGDDICVAGACMPAGCDHQLHSTLRRDKCGVCGGDDSSCKVVKGTFNEQGTFGYNEVMKIPAGSANIDIRQKGYNNMKEDDNYLSLRAANGEFLLNGHFQVSLARQQIAFQDTVLEYSGSDAIIERINGTGPIRSDIYVHVLSVGSHPPDISYEYMTAAVPNAVIRPISSALYLWRVTDTWTECDRACRGQQSQKLMCLDMSTHRQSHDRNCQNVLKPKQATRMCNIDCSTRWITEDVSSCSAKCGSGQKRQRVSCVKMEGDRQTPASEHLCDRNSKPSDIASCYIDCSGRKWNYGEWTSCSETCGSNGKMHRKSYCVDDSNRRVDESLCGREQKEATERECNRIPCPRWVYGHWSECSRSCDGGVKMRHAQCLDAADRETHTSRCGPAQTQEHCNEHACTWWQFGVWSDCSAKCGDGVQYRDANCTDRHRSVLPEHRCLKMEKIITKPCHRESCPKYKLGEWSQCSVSCEDGWSSRRVSCVSGNGTEVDMSLCGTASDRPASHQTCNLGTCPFWRNTDWSACSVSCGIGHRERTTECIYREQSVDASFCGDTKMPETSQTCHLLPCTSWKPSHWSPCSVTCGSGIQTRSVSCTRGSEGTIVDEYFCDRNTRPRLKKTCEKDTCDGPRVLQKLQADVPPIRWATGPWTACSATCGNGTQRRLLKCRDHVRDLPDEYCNHLDKEVSTRNCRLRDCSYWKMAEWEECPATCGTHVQQSRNVTCVSAEDGGRTILKDVDCDVQKRPTSARNCRLEPCPKGEEHIGSWIIGDWSKCSASCGGGWRRRSVSCTSSSCDETRKPKMFDKCNEELCPPLTNNSWQISPWTHCSVSCGGGVQRRKIWCEDVLSGRKQDDIECSEIKPREQRDCEMPPCRSHYHNKTSSASMTSLSSSNSNTTSSASASSLPILPPVVSWQTSAWSACSAKCGRGTKRRVVECVNPSLNVTVASTECDQTKKPVEEVRCRTKHCPRWKTTTWSSCSVTCGRGIRRREVQCYRGRKNLVSDSECNPKTKLNSVANCFPVACPAYRWNVTPWSKCKDECARGQKQTRRVHCISTSGKRAAPRMCELARAPTSIRECDTSNCPYEWVPGDWQTCSKSCGEGVQTREVRCRRKINFNSTIPIIFMLEDEPAVPKEKCELFPKPNESQTCELNPCDSEFKWSFGPWGECSKNCGQGIRRRRVKCVANDGRRVERVKCTTKKPRRTQYCFERNCLPSTCQELKSQNVKAKDGNYTILLDGFTIEIYCHRMNSTIPKAYLNVNPRTNFAEVYGKKLIYPHTCPFNGDRNDSCHCSEDGDASAGLTRFNKVRIDLLNRKFHLADYTFAKREYGVHVPYGTAGDCYSMKDCPQGIFSIDLKSAGLKLVDDLNWEDQGHRTSSRIDRFYNNAKVIGHCGGFCGKCSPERYKGLIFEVNTKLLNHVKNGGHIDDELDDDGFSGDMD</sequence>
<gene>
    <name evidence="18" type="primary">gon-1</name>
    <name evidence="18" type="ORF">F25H8.3</name>
</gene>
<accession>Q19791</accession>
<accession>Q27524</accession>
<reference key="1">
    <citation type="journal article" date="1998" name="Science">
        <title>Genome sequence of the nematode C. elegans: a platform for investigating biology.</title>
        <authorList>
            <consortium name="The C. elegans sequencing consortium"/>
        </authorList>
    </citation>
    <scope>NUCLEOTIDE SEQUENCE [LARGE SCALE GENOMIC DNA]</scope>
    <source>
        <strain>Bristol N2</strain>
    </source>
</reference>
<reference key="2">
    <citation type="journal article" date="1999" name="Dev. Biol.">
        <title>The gon-1 gene is required for gonadal morphogenesis in Caenorhabditis elegans.</title>
        <authorList>
            <person name="Blelloch R."/>
            <person name="Anna-Arriola S.S."/>
            <person name="Gao D."/>
            <person name="Li Y."/>
            <person name="Hodgkin J."/>
            <person name="Kimble J."/>
        </authorList>
    </citation>
    <scope>FUNCTION</scope>
</reference>
<reference key="3">
    <citation type="journal article" date="1999" name="Nature">
        <title>Control of organ shape by a secreted metalloprotease in the nematode Caenorhabditis elegans.</title>
        <authorList>
            <person name="Blelloch R."/>
            <person name="Kimble J."/>
        </authorList>
    </citation>
    <scope>FUNCTION</scope>
    <scope>SUBCELLULAR LOCATION</scope>
    <scope>TISSUE SPECIFICITY</scope>
    <scope>DEVELOPMENTAL STAGE</scope>
    <scope>MUTAGENESIS OF GLU-425</scope>
</reference>
<reference key="4">
    <citation type="journal article" date="2003" name="Nat. Biotechnol.">
        <title>Lectin affinity capture, isotope-coded tagging and mass spectrometry to identify N-linked glycoproteins.</title>
        <authorList>
            <person name="Kaji H."/>
            <person name="Saito H."/>
            <person name="Yamauchi Y."/>
            <person name="Shinkawa T."/>
            <person name="Taoka M."/>
            <person name="Hirabayashi J."/>
            <person name="Kasai K."/>
            <person name="Takahashi N."/>
            <person name="Isobe T."/>
        </authorList>
    </citation>
    <scope>GLYCOSYLATION [LARGE SCALE ANALYSIS] AT ASN-1432</scope>
    <scope>IDENTIFICATION BY MASS SPECTROMETRY</scope>
    <source>
        <strain>Bristol N2</strain>
    </source>
</reference>
<reference key="5">
    <citation type="journal article" date="2004" name="Curr. Biol.">
        <title>GON-1 and fibulin have antagonistic roles in control of organ shape.</title>
        <authorList>
            <person name="Hesselson D."/>
            <person name="Newman C."/>
            <person name="Kim K.W."/>
            <person name="Kimble J."/>
        </authorList>
    </citation>
    <scope>FUNCTION</scope>
</reference>
<reference key="6">
    <citation type="journal article" date="2007" name="Mol. Cell. Proteomics">
        <title>Proteomics reveals N-linked glycoprotein diversity in Caenorhabditis elegans and suggests an atypical translocation mechanism for integral membrane proteins.</title>
        <authorList>
            <person name="Kaji H."/>
            <person name="Kamiie J."/>
            <person name="Kawakami H."/>
            <person name="Kido K."/>
            <person name="Yamauchi Y."/>
            <person name="Shinkawa T."/>
            <person name="Taoka M."/>
            <person name="Takahashi N."/>
            <person name="Isobe T."/>
        </authorList>
    </citation>
    <scope>GLYCOSYLATION [LARGE SCALE ANALYSIS] AT ASN-1432</scope>
    <scope>IDENTIFICATION BY MASS SPECTROMETRY</scope>
    <source>
        <strain>Bristol N2</strain>
    </source>
</reference>
<reference key="7">
    <citation type="journal article" date="2012" name="Mol. Biol. Cell">
        <title>Identification of a novel ADAMTS9/GON-1 function for protein transport from the ER to the Golgi.</title>
        <authorList>
            <person name="Yoshina S."/>
            <person name="Sakaki K."/>
            <person name="Yonezumi-Hayashi A."/>
            <person name="Gengyo-Ando K."/>
            <person name="Inoue H."/>
            <person name="Iino Y."/>
            <person name="Mitani S."/>
        </authorList>
    </citation>
    <scope>FUNCTION IN TRANSPORT</scope>
    <scope>SUBCELLULAR LOCATION</scope>
    <scope>DOMAIN</scope>
    <scope>DISRUPTION PHENOTYPE</scope>
</reference>
<reference key="8">
    <citation type="journal article" date="2014" name="J. Neurosci.">
        <title>Perlecan antagonizes collagen IV and ADAMTS9/GON-1 in restricting the growth of presynaptic boutons.</title>
        <authorList>
            <person name="Qin J."/>
            <person name="Liang J."/>
            <person name="Ding M."/>
        </authorList>
    </citation>
    <scope>FUNCTION</scope>
</reference>
<reference key="9">
    <citation type="journal article" date="2014" name="J. Neurosci.">
        <title>Regulation of synaptic extracellular matrix composition is critical for proper synapse morphology.</title>
        <authorList>
            <person name="Kurshan P.T."/>
            <person name="Phan A.Q."/>
            <person name="Wang G.J."/>
            <person name="Crane M.M."/>
            <person name="Lu H."/>
            <person name="Shen K."/>
        </authorList>
    </citation>
    <scope>FUNCTION</scope>
    <scope>TISSUE SPECIFICITY</scope>
</reference>
<reference key="10">
    <citation type="journal article" date="2015" name="PLoS ONE">
        <title>Loss of C. elegans GON-1, an ADAMTS9 Homolog, decreases secretion resulting in altered lifespan and dauer formation.</title>
        <authorList>
            <person name="Yoshina S."/>
            <person name="Mitani S."/>
        </authorList>
    </citation>
    <scope>FUNCTION</scope>
    <scope>TISSUE SPECIFICITY</scope>
    <scope>DEVELOPMENTAL STAGE</scope>
    <scope>DOMAIN</scope>
</reference>
<organism>
    <name type="scientific">Caenorhabditis elegans</name>
    <dbReference type="NCBI Taxonomy" id="6239"/>
    <lineage>
        <taxon>Eukaryota</taxon>
        <taxon>Metazoa</taxon>
        <taxon>Ecdysozoa</taxon>
        <taxon>Nematoda</taxon>
        <taxon>Chromadorea</taxon>
        <taxon>Rhabditida</taxon>
        <taxon>Rhabditina</taxon>
        <taxon>Rhabditomorpha</taxon>
        <taxon>Rhabditoidea</taxon>
        <taxon>Rhabditidae</taxon>
        <taxon>Peloderinae</taxon>
        <taxon>Caenorhabditis</taxon>
    </lineage>
</organism>
<comment type="function">
    <text evidence="8 9 11 13 14 15 16">Secreted metalloprotease required for distal tip cell (DTC) migration along the body wall basement membranes, a key step that promotes gonad morphogenesis (PubMed:10376599, PubMed:10588887, PubMed:15556862). Probably acts by remodeling the basement membrane during cell migration (PubMed:10376599). Required to restrict presynaptic growth at the neuromuscular junctions (NMJ) in late larval stage and in adult motor neurons, probably by controlling collagen IV emb-9 degradation, a component of the synapse basement membrane (PubMed:25080592, PubMed:25232106). Also involved in the organization of adult muscle morphology (PubMed:25232106). Has a protease-independent function in promoting the transport from the endoplasmic reticulum to the Golgi apparatus of a variety of secretory cargos (PubMed:22419820, PubMed:26218657). Required for the secretion of insulin-like peptide ins-7, daf-28 and ins-18 and TGF beta-like protein daf-7 (PubMed:26218657). In peripheral tissues, negatively regulates insulin-mediated daf-16 translocation and thereby negatively regulates lifespan and dauer formation (PubMed:26218657).</text>
</comment>
<comment type="cofactor">
    <cofactor evidence="2">
        <name>Zn(2+)</name>
        <dbReference type="ChEBI" id="CHEBI:29105"/>
    </cofactor>
    <text evidence="2">Binds 1 zinc ion per subunit.</text>
</comment>
<comment type="subcellular location">
    <subcellularLocation>
        <location evidence="8">Secreted</location>
        <location evidence="8">Extracellular space</location>
        <location evidence="8">Extracellular matrix</location>
        <location evidence="8">Basement membrane</location>
    </subcellularLocation>
    <subcellularLocation>
        <location evidence="13">Endoplasmic reticulum</location>
    </subcellularLocation>
    <subcellularLocation>
        <location evidence="13">Golgi apparatus</location>
    </subcellularLocation>
</comment>
<comment type="tissue specificity">
    <text evidence="8 15 16">Expressed by the gonadal distal tip cells (DTCs) (PubMed:10376599). Expressed in muscles, including body wall, vulval and anal depressor muscles (PubMed:10376599, PubMed:25232106, PubMed:26218657). Expressed in motor neurons and in ASI and ASJ neurons (PubMed:26218657).</text>
</comment>
<comment type="developmental stage">
    <text evidence="8 16">Expressed in some cells at the embryonic stage (260-280 minutes after the first cleavage) (PubMed:26218657). In hermaphrodites, expression is first detected in gonads in L2 larvae and is limited to the distal tip cells (DTCs), then continues in DTCs throughout L4 larval stage and becomes faint or absent in adults (PubMed:10376599). Also expressed in muscle cells throughout development (PubMed:10376599). At the larval stages, expressed in some head neurons, intestine and excretory cells (PubMed:26218657).</text>
</comment>
<comment type="domain">
    <text evidence="13 16">The GON domain mediates protease-independent function in ER to Golgi transport.</text>
</comment>
<comment type="disruption phenotype">
    <text evidence="13">RNAi-mediated knockdown in distal tip cells results in deformation of ER structure and inhibition of protein secretion which are rescued upon GON-domain expression.</text>
</comment>
<protein>
    <recommendedName>
        <fullName evidence="17">A disintegrin and metalloproteinase with thrombospondin motifs gon-1</fullName>
        <shortName evidence="17">ADAMTS gon-1</shortName>
        <ecNumber evidence="1">3.4.24.-</ecNumber>
    </recommendedName>
    <alternativeName>
        <fullName evidence="18">Abnormal gonad development protein 1</fullName>
    </alternativeName>
</protein>
<proteinExistence type="evidence at protein level"/>
<evidence type="ECO:0000250" key="1">
    <source>
        <dbReference type="UniProtKB" id="Q9P2N4"/>
    </source>
</evidence>
<evidence type="ECO:0000250" key="2">
    <source>
        <dbReference type="UniProtKB" id="Q9UHI8"/>
    </source>
</evidence>
<evidence type="ECO:0000255" key="3"/>
<evidence type="ECO:0000255" key="4">
    <source>
        <dbReference type="PROSITE-ProRule" id="PRU00210"/>
    </source>
</evidence>
<evidence type="ECO:0000255" key="5">
    <source>
        <dbReference type="PROSITE-ProRule" id="PRU00276"/>
    </source>
</evidence>
<evidence type="ECO:0000255" key="6">
    <source>
        <dbReference type="PROSITE-ProRule" id="PRU00383"/>
    </source>
</evidence>
<evidence type="ECO:0000256" key="7">
    <source>
        <dbReference type="SAM" id="MobiDB-lite"/>
    </source>
</evidence>
<evidence type="ECO:0000269" key="8">
    <source>
    </source>
</evidence>
<evidence type="ECO:0000269" key="9">
    <source>
    </source>
</evidence>
<evidence type="ECO:0000269" key="10">
    <source>
    </source>
</evidence>
<evidence type="ECO:0000269" key="11">
    <source>
    </source>
</evidence>
<evidence type="ECO:0000269" key="12">
    <source>
    </source>
</evidence>
<evidence type="ECO:0000269" key="13">
    <source>
    </source>
</evidence>
<evidence type="ECO:0000269" key="14">
    <source>
    </source>
</evidence>
<evidence type="ECO:0000269" key="15">
    <source>
    </source>
</evidence>
<evidence type="ECO:0000269" key="16">
    <source>
    </source>
</evidence>
<evidence type="ECO:0000305" key="17"/>
<evidence type="ECO:0000312" key="18">
    <source>
        <dbReference type="WormBase" id="F25H8.3a"/>
    </source>
</evidence>
<name>GON1_CAEEL</name>
<feature type="signal peptide" evidence="3">
    <location>
        <begin position="1"/>
        <end position="28"/>
    </location>
</feature>
<feature type="propeptide" id="PRO_0000440960" evidence="1">
    <location>
        <begin position="29"/>
        <end position="273"/>
    </location>
</feature>
<feature type="chain" id="PRO_0000250561" description="A disintegrin and metalloproteinase with thrombospondin motifs gon-1">
    <location>
        <begin position="274"/>
        <end position="2150"/>
    </location>
</feature>
<feature type="domain" description="Peptidase M12B" evidence="5">
    <location>
        <begin position="280"/>
        <end position="493"/>
    </location>
</feature>
<feature type="domain" description="Disintegrin">
    <location>
        <begin position="503"/>
        <end position="587"/>
    </location>
</feature>
<feature type="domain" description="TSP type-1 1" evidence="4">
    <location>
        <begin position="588"/>
        <end position="643"/>
    </location>
</feature>
<feature type="domain" description="TSP type-1 2" evidence="4">
    <location>
        <begin position="943"/>
        <end position="1003"/>
    </location>
</feature>
<feature type="domain" description="TSP type-1 3" evidence="4">
    <location>
        <begin position="1004"/>
        <end position="1057"/>
    </location>
</feature>
<feature type="domain" description="TSP type-1 4" evidence="4">
    <location>
        <begin position="1060"/>
        <end position="1115"/>
    </location>
</feature>
<feature type="domain" description="TSP type-1 5" evidence="4">
    <location>
        <begin position="1116"/>
        <end position="1165"/>
    </location>
</feature>
<feature type="domain" description="TSP type-1 6" evidence="4">
    <location>
        <begin position="1168"/>
        <end position="1227"/>
    </location>
</feature>
<feature type="domain" description="TSP type-1 7" evidence="4">
    <location>
        <begin position="1228"/>
        <end position="1277"/>
    </location>
</feature>
<feature type="domain" description="TSP type-1 8" evidence="4">
    <location>
        <begin position="1280"/>
        <end position="1339"/>
    </location>
</feature>
<feature type="domain" description="TSP type-1 9" evidence="4">
    <location>
        <begin position="1352"/>
        <end position="1409"/>
    </location>
</feature>
<feature type="domain" description="TSP type-1 10" evidence="4">
    <location>
        <begin position="1410"/>
        <end position="1469"/>
    </location>
</feature>
<feature type="domain" description="TSP type-1 11" evidence="4">
    <location>
        <begin position="1474"/>
        <end position="1524"/>
    </location>
</feature>
<feature type="domain" description="TSP type-1 12" evidence="4">
    <location>
        <begin position="1527"/>
        <end position="1585"/>
    </location>
</feature>
<feature type="domain" description="TSP type-1 13" evidence="4">
    <location>
        <begin position="1621"/>
        <end position="1675"/>
    </location>
</feature>
<feature type="domain" description="TSP type-1 14" evidence="4">
    <location>
        <begin position="1678"/>
        <end position="1736"/>
    </location>
</feature>
<feature type="domain" description="TSP type-1 15" evidence="4">
    <location>
        <begin position="1737"/>
        <end position="1793"/>
    </location>
</feature>
<feature type="domain" description="TSP type-1 16" evidence="4">
    <location>
        <begin position="1794"/>
        <end position="1866"/>
    </location>
</feature>
<feature type="domain" description="TSP type-1 17" evidence="4">
    <location>
        <begin position="1867"/>
        <end position="1924"/>
    </location>
</feature>
<feature type="domain" description="GON" evidence="6">
    <location>
        <begin position="1924"/>
        <end position="2123"/>
    </location>
</feature>
<feature type="region of interest" description="Disordered" evidence="7">
    <location>
        <begin position="1590"/>
        <end position="1614"/>
    </location>
</feature>
<feature type="compositionally biased region" description="Low complexity" evidence="7">
    <location>
        <begin position="1592"/>
        <end position="1614"/>
    </location>
</feature>
<feature type="active site" evidence="5">
    <location>
        <position position="425"/>
    </location>
</feature>
<feature type="binding site" evidence="5">
    <location>
        <position position="424"/>
    </location>
    <ligand>
        <name>Zn(2+)</name>
        <dbReference type="ChEBI" id="CHEBI:29105"/>
        <note>catalytic</note>
    </ligand>
</feature>
<feature type="binding site" evidence="5">
    <location>
        <position position="428"/>
    </location>
    <ligand>
        <name>Zn(2+)</name>
        <dbReference type="ChEBI" id="CHEBI:29105"/>
        <note>catalytic</note>
    </ligand>
</feature>
<feature type="binding site" evidence="5">
    <location>
        <position position="434"/>
    </location>
    <ligand>
        <name>Zn(2+)</name>
        <dbReference type="ChEBI" id="CHEBI:29105"/>
        <note>catalytic</note>
    </ligand>
</feature>
<feature type="glycosylation site" description="N-linked (GlcNAc...) asparagine" evidence="3">
    <location>
        <position position="134"/>
    </location>
</feature>
<feature type="glycosylation site" description="N-linked (GlcNAc...) asparagine" evidence="3">
    <location>
        <position position="213"/>
    </location>
</feature>
<feature type="glycosylation site" description="N-linked (GlcNAc...) asparagine" evidence="3">
    <location>
        <position position="243"/>
    </location>
</feature>
<feature type="glycosylation site" description="N-linked (GlcNAc...) asparagine" evidence="3">
    <location>
        <position position="248"/>
    </location>
</feature>
<feature type="glycosylation site" description="N-linked (GlcNAc...) asparagine" evidence="3">
    <location>
        <position position="842"/>
    </location>
</feature>
<feature type="glycosylation site" description="N-linked (GlcNAc...) asparagine" evidence="3">
    <location>
        <position position="1139"/>
    </location>
</feature>
<feature type="glycosylation site" description="N-linked (GlcNAc...) asparagine" evidence="3">
    <location>
        <position position="1199"/>
    </location>
</feature>
<feature type="glycosylation site" description="N-linked (GlcNAc...) asparagine" evidence="3">
    <location>
        <position position="1370"/>
    </location>
</feature>
<feature type="glycosylation site" description="N-linked (GlcNAc...) asparagine" evidence="10 12">
    <location>
        <position position="1432"/>
    </location>
</feature>
<feature type="glycosylation site" description="N-linked (GlcNAc...) asparagine" evidence="3">
    <location>
        <position position="1528"/>
    </location>
</feature>
<feature type="glycosylation site" description="N-linked (GlcNAc...) asparagine" evidence="3">
    <location>
        <position position="1590"/>
    </location>
</feature>
<feature type="glycosylation site" description="N-linked (GlcNAc...) asparagine" evidence="3">
    <location>
        <position position="1606"/>
    </location>
</feature>
<feature type="glycosylation site" description="N-linked (GlcNAc...) asparagine" evidence="3">
    <location>
        <position position="1654"/>
    </location>
</feature>
<feature type="glycosylation site" description="N-linked (GlcNAc...) asparagine" evidence="3">
    <location>
        <position position="1828"/>
    </location>
</feature>
<feature type="glycosylation site" description="N-linked (GlcNAc...) asparagine" evidence="3">
    <location>
        <position position="1855"/>
    </location>
</feature>
<feature type="glycosylation site" description="N-linked (GlcNAc...) asparagine" evidence="3">
    <location>
        <position position="1942"/>
    </location>
</feature>
<feature type="glycosylation site" description="N-linked (GlcNAc...) asparagine" evidence="3">
    <location>
        <position position="1960"/>
    </location>
</feature>
<feature type="glycosylation site" description="N-linked (GlcNAc...) asparagine" evidence="3">
    <location>
        <position position="1997"/>
    </location>
</feature>
<feature type="disulfide bond" evidence="5">
    <location>
        <begin position="402"/>
        <end position="488"/>
    </location>
</feature>
<feature type="disulfide bond" evidence="5">
    <location>
        <begin position="440"/>
        <end position="470"/>
    </location>
</feature>
<feature type="disulfide bond" evidence="4">
    <location>
        <begin position="600"/>
        <end position="637"/>
    </location>
</feature>
<feature type="disulfide bond" evidence="4">
    <location>
        <begin position="604"/>
        <end position="642"/>
    </location>
</feature>
<feature type="disulfide bond" evidence="4">
    <location>
        <begin position="615"/>
        <end position="627"/>
    </location>
</feature>
<feature type="disulfide bond" evidence="4">
    <location>
        <begin position="1679"/>
        <end position="1718"/>
    </location>
</feature>
<feature type="disulfide bond" evidence="4">
    <location>
        <begin position="1690"/>
        <end position="1730"/>
    </location>
</feature>
<feature type="disulfide bond" evidence="4">
    <location>
        <begin position="1690"/>
        <end position="1694"/>
    </location>
</feature>
<feature type="disulfide bond" evidence="4">
    <location>
        <begin position="1694"/>
        <end position="1735"/>
    </location>
</feature>
<feature type="disulfide bond" evidence="4">
    <location>
        <begin position="1705"/>
        <end position="1718"/>
    </location>
</feature>
<feature type="disulfide bond" evidence="4">
    <location>
        <begin position="1730"/>
        <end position="1735"/>
    </location>
</feature>
<feature type="mutagenesis site" description="Loss of function; abolishes DTCs migration or gonad arm extension." evidence="8">
    <original>E</original>
    <variation>A</variation>
    <location>
        <position position="425"/>
    </location>
</feature>
<keyword id="KW-0084">Basement membrane</keyword>
<keyword id="KW-0217">Developmental protein</keyword>
<keyword id="KW-1015">Disulfide bond</keyword>
<keyword id="KW-0256">Endoplasmic reticulum</keyword>
<keyword id="KW-0931">ER-Golgi transport</keyword>
<keyword id="KW-0272">Extracellular matrix</keyword>
<keyword id="KW-0325">Glycoprotein</keyword>
<keyword id="KW-0333">Golgi apparatus</keyword>
<keyword id="KW-0378">Hydrolase</keyword>
<keyword id="KW-0479">Metal-binding</keyword>
<keyword id="KW-0482">Metalloprotease</keyword>
<keyword id="KW-0645">Protease</keyword>
<keyword id="KW-0653">Protein transport</keyword>
<keyword id="KW-1185">Reference proteome</keyword>
<keyword id="KW-0677">Repeat</keyword>
<keyword id="KW-0964">Secreted</keyword>
<keyword id="KW-0732">Signal</keyword>
<keyword id="KW-0813">Transport</keyword>
<keyword id="KW-0862">Zinc</keyword>
<keyword id="KW-0865">Zymogen</keyword>
<dbReference type="EC" id="3.4.24.-" evidence="1"/>
<dbReference type="EMBL" id="Z69360">
    <property type="protein sequence ID" value="CAA93287.2"/>
    <property type="molecule type" value="Genomic_DNA"/>
</dbReference>
<dbReference type="EMBL" id="Z69361">
    <property type="protein sequence ID" value="CAA93287.2"/>
    <property type="status" value="JOINED"/>
    <property type="molecule type" value="Genomic_DNA"/>
</dbReference>
<dbReference type="PIR" id="T21371">
    <property type="entry name" value="T21371"/>
</dbReference>
<dbReference type="RefSeq" id="NP_001255447.1">
    <property type="nucleotide sequence ID" value="NM_001268518.1"/>
</dbReference>
<dbReference type="RefSeq" id="NP_001359558.1">
    <property type="nucleotide sequence ID" value="NM_001372913.1"/>
</dbReference>
<dbReference type="SMR" id="Q19791"/>
<dbReference type="FunCoup" id="Q19791">
    <property type="interactions" value="761"/>
</dbReference>
<dbReference type="STRING" id="6239.F25H8.3b.1"/>
<dbReference type="MEROPS" id="M12.135"/>
<dbReference type="GlyCosmos" id="Q19791">
    <property type="glycosylation" value="18 sites, No reported glycans"/>
</dbReference>
<dbReference type="iPTMnet" id="Q19791"/>
<dbReference type="PaxDb" id="6239-F25H8.3b"/>
<dbReference type="EnsemblMetazoa" id="F25H8.3a.1">
    <property type="protein sequence ID" value="F25H8.3a.1"/>
    <property type="gene ID" value="WBGene00001650"/>
</dbReference>
<dbReference type="EnsemblMetazoa" id="F25H8.3a.2">
    <property type="protein sequence ID" value="F25H8.3a.2"/>
    <property type="gene ID" value="WBGene00001650"/>
</dbReference>
<dbReference type="GeneID" id="177850"/>
<dbReference type="UCSC" id="F25H8.3">
    <property type="organism name" value="c. elegans"/>
</dbReference>
<dbReference type="AGR" id="WB:WBGene00001650"/>
<dbReference type="WormBase" id="F25H8.3a">
    <property type="protein sequence ID" value="CE42668"/>
    <property type="gene ID" value="WBGene00001650"/>
    <property type="gene designation" value="gon-1"/>
</dbReference>
<dbReference type="eggNOG" id="KOG3538">
    <property type="taxonomic scope" value="Eukaryota"/>
</dbReference>
<dbReference type="GeneTree" id="ENSGT00940000167121"/>
<dbReference type="HOGENOM" id="CLU_000660_0_1_1"/>
<dbReference type="InParanoid" id="Q19791"/>
<dbReference type="PhylomeDB" id="Q19791"/>
<dbReference type="Reactome" id="R-CEL-5173214">
    <property type="pathway name" value="O-glycosylation of TSR domain-containing proteins"/>
</dbReference>
<dbReference type="PRO" id="PR:Q19791"/>
<dbReference type="Proteomes" id="UP000001940">
    <property type="component" value="Chromosome IV"/>
</dbReference>
<dbReference type="Bgee" id="WBGene00001650">
    <property type="expression patterns" value="Expressed in pharyngeal muscle cell (C elegans) and 3 other cell types or tissues"/>
</dbReference>
<dbReference type="ExpressionAtlas" id="Q19791">
    <property type="expression patterns" value="baseline and differential"/>
</dbReference>
<dbReference type="GO" id="GO:0005604">
    <property type="term" value="C:basement membrane"/>
    <property type="evidence" value="ECO:0007669"/>
    <property type="project" value="UniProtKB-SubCell"/>
</dbReference>
<dbReference type="GO" id="GO:0005783">
    <property type="term" value="C:endoplasmic reticulum"/>
    <property type="evidence" value="ECO:0007669"/>
    <property type="project" value="UniProtKB-SubCell"/>
</dbReference>
<dbReference type="GO" id="GO:0031012">
    <property type="term" value="C:extracellular matrix"/>
    <property type="evidence" value="ECO:0000318"/>
    <property type="project" value="GO_Central"/>
</dbReference>
<dbReference type="GO" id="GO:0005576">
    <property type="term" value="C:extracellular region"/>
    <property type="evidence" value="ECO:0007669"/>
    <property type="project" value="UniProtKB-KW"/>
</dbReference>
<dbReference type="GO" id="GO:0005794">
    <property type="term" value="C:Golgi apparatus"/>
    <property type="evidence" value="ECO:0007669"/>
    <property type="project" value="UniProtKB-SubCell"/>
</dbReference>
<dbReference type="GO" id="GO:0004222">
    <property type="term" value="F:metalloendopeptidase activity"/>
    <property type="evidence" value="ECO:0000318"/>
    <property type="project" value="GO_Central"/>
</dbReference>
<dbReference type="GO" id="GO:0008237">
    <property type="term" value="F:metallopeptidase activity"/>
    <property type="evidence" value="ECO:0000315"/>
    <property type="project" value="WormBase"/>
</dbReference>
<dbReference type="GO" id="GO:0008270">
    <property type="term" value="F:zinc ion binding"/>
    <property type="evidence" value="ECO:0007669"/>
    <property type="project" value="InterPro"/>
</dbReference>
<dbReference type="GO" id="GO:0016477">
    <property type="term" value="P:cell migration"/>
    <property type="evidence" value="ECO:0000315"/>
    <property type="project" value="WormBase"/>
</dbReference>
<dbReference type="GO" id="GO:0006888">
    <property type="term" value="P:endoplasmic reticulum to Golgi vesicle-mediated transport"/>
    <property type="evidence" value="ECO:0000315"/>
    <property type="project" value="WormBase"/>
</dbReference>
<dbReference type="GO" id="GO:0030198">
    <property type="term" value="P:extracellular matrix organization"/>
    <property type="evidence" value="ECO:0000318"/>
    <property type="project" value="GO_Central"/>
</dbReference>
<dbReference type="GO" id="GO:0008406">
    <property type="term" value="P:gonad development"/>
    <property type="evidence" value="ECO:0000315"/>
    <property type="project" value="WormBase"/>
</dbReference>
<dbReference type="GO" id="GO:0048644">
    <property type="term" value="P:muscle organ morphogenesis"/>
    <property type="evidence" value="ECO:0000315"/>
    <property type="project" value="UniProtKB"/>
</dbReference>
<dbReference type="GO" id="GO:1905607">
    <property type="term" value="P:negative regulation of presynapse assembly"/>
    <property type="evidence" value="ECO:0000315"/>
    <property type="project" value="UniProtKB"/>
</dbReference>
<dbReference type="GO" id="GO:0015031">
    <property type="term" value="P:protein transport"/>
    <property type="evidence" value="ECO:0007669"/>
    <property type="project" value="UniProtKB-KW"/>
</dbReference>
<dbReference type="GO" id="GO:0006508">
    <property type="term" value="P:proteolysis"/>
    <property type="evidence" value="ECO:0000318"/>
    <property type="project" value="GO_Central"/>
</dbReference>
<dbReference type="CDD" id="cd04273">
    <property type="entry name" value="ZnMc_ADAMTS_like"/>
    <property type="match status" value="1"/>
</dbReference>
<dbReference type="FunFam" id="2.20.100.10:FF:000006">
    <property type="entry name" value="A disintegrin and metalloproteinase with thrombospondin motifs 1"/>
    <property type="match status" value="1"/>
</dbReference>
<dbReference type="FunFam" id="2.60.120.830:FF:000001">
    <property type="entry name" value="A disintegrin and metalloproteinase with thrombospondin motifs 1"/>
    <property type="match status" value="1"/>
</dbReference>
<dbReference type="FunFam" id="3.40.390.10:FF:000001">
    <property type="entry name" value="A disintegrin and metalloproteinase with thrombospondin motifs 1"/>
    <property type="match status" value="1"/>
</dbReference>
<dbReference type="FunFam" id="2.20.100.10:FF:000005">
    <property type="entry name" value="ADAM metallopeptidase with thrombospondin type 1 motif 9"/>
    <property type="match status" value="7"/>
</dbReference>
<dbReference type="Gene3D" id="2.60.120.830">
    <property type="match status" value="1"/>
</dbReference>
<dbReference type="Gene3D" id="3.40.1620.60">
    <property type="match status" value="1"/>
</dbReference>
<dbReference type="Gene3D" id="3.40.390.10">
    <property type="entry name" value="Collagenase (Catalytic Domain)"/>
    <property type="match status" value="1"/>
</dbReference>
<dbReference type="Gene3D" id="2.20.100.10">
    <property type="entry name" value="Thrombospondin type-1 (TSP1) repeat"/>
    <property type="match status" value="16"/>
</dbReference>
<dbReference type="InterPro" id="IPR013273">
    <property type="entry name" value="ADAMTS/ADAMTS-like"/>
</dbReference>
<dbReference type="InterPro" id="IPR050439">
    <property type="entry name" value="ADAMTS_ADAMTS-like"/>
</dbReference>
<dbReference type="InterPro" id="IPR041645">
    <property type="entry name" value="ADAMTS_CR_2"/>
</dbReference>
<dbReference type="InterPro" id="IPR010294">
    <property type="entry name" value="ADAMTS_spacer1"/>
</dbReference>
<dbReference type="InterPro" id="IPR024079">
    <property type="entry name" value="MetalloPept_cat_dom_sf"/>
</dbReference>
<dbReference type="InterPro" id="IPR012314">
    <property type="entry name" value="Pept_M12B_GON-ADAMTSs"/>
</dbReference>
<dbReference type="InterPro" id="IPR001590">
    <property type="entry name" value="Peptidase_M12B"/>
</dbReference>
<dbReference type="InterPro" id="IPR000884">
    <property type="entry name" value="TSP1_rpt"/>
</dbReference>
<dbReference type="InterPro" id="IPR036383">
    <property type="entry name" value="TSP1_rpt_sf"/>
</dbReference>
<dbReference type="PANTHER" id="PTHR13723">
    <property type="entry name" value="ADAMTS A DISINTEGRIN AND METALLOPROTEASE WITH THROMBOSPONDIN MOTIFS PROTEASE"/>
    <property type="match status" value="1"/>
</dbReference>
<dbReference type="PANTHER" id="PTHR13723:SF281">
    <property type="entry name" value="PAPILIN"/>
    <property type="match status" value="1"/>
</dbReference>
<dbReference type="Pfam" id="PF17771">
    <property type="entry name" value="ADAMTS_CR_2"/>
    <property type="match status" value="1"/>
</dbReference>
<dbReference type="Pfam" id="PF05986">
    <property type="entry name" value="ADAMTS_spacer1"/>
    <property type="match status" value="1"/>
</dbReference>
<dbReference type="Pfam" id="PF08685">
    <property type="entry name" value="GON"/>
    <property type="match status" value="1"/>
</dbReference>
<dbReference type="Pfam" id="PF01421">
    <property type="entry name" value="Reprolysin"/>
    <property type="match status" value="1"/>
</dbReference>
<dbReference type="Pfam" id="PF19030">
    <property type="entry name" value="TSP1_ADAMTS"/>
    <property type="match status" value="16"/>
</dbReference>
<dbReference type="Pfam" id="PF00090">
    <property type="entry name" value="TSP_1"/>
    <property type="match status" value="1"/>
</dbReference>
<dbReference type="PRINTS" id="PR01857">
    <property type="entry name" value="ADAMTSFAMILY"/>
</dbReference>
<dbReference type="SMART" id="SM00209">
    <property type="entry name" value="TSP1"/>
    <property type="match status" value="18"/>
</dbReference>
<dbReference type="SUPFAM" id="SSF55486">
    <property type="entry name" value="Metalloproteases ('zincins'), catalytic domain"/>
    <property type="match status" value="1"/>
</dbReference>
<dbReference type="SUPFAM" id="SSF82895">
    <property type="entry name" value="TSP-1 type 1 repeat"/>
    <property type="match status" value="16"/>
</dbReference>
<dbReference type="PROSITE" id="PS50215">
    <property type="entry name" value="ADAM_MEPRO"/>
    <property type="match status" value="1"/>
</dbReference>
<dbReference type="PROSITE" id="PS51046">
    <property type="entry name" value="GON"/>
    <property type="match status" value="1"/>
</dbReference>
<dbReference type="PROSITE" id="PS50092">
    <property type="entry name" value="TSP1"/>
    <property type="match status" value="15"/>
</dbReference>
<dbReference type="PROSITE" id="PS00142">
    <property type="entry name" value="ZINC_PROTEASE"/>
    <property type="match status" value="1"/>
</dbReference>